<proteinExistence type="inferred from homology"/>
<dbReference type="EMBL" id="CP000473">
    <property type="protein sequence ID" value="ABJ86069.1"/>
    <property type="molecule type" value="Genomic_DNA"/>
</dbReference>
<dbReference type="SMR" id="Q01W96"/>
<dbReference type="FunCoup" id="Q01W96">
    <property type="interactions" value="594"/>
</dbReference>
<dbReference type="STRING" id="234267.Acid_5114"/>
<dbReference type="KEGG" id="sus:Acid_5114"/>
<dbReference type="eggNOG" id="COG0185">
    <property type="taxonomic scope" value="Bacteria"/>
</dbReference>
<dbReference type="HOGENOM" id="CLU_144911_0_1_0"/>
<dbReference type="InParanoid" id="Q01W96"/>
<dbReference type="OrthoDB" id="9797833at2"/>
<dbReference type="GO" id="GO:0005737">
    <property type="term" value="C:cytoplasm"/>
    <property type="evidence" value="ECO:0007669"/>
    <property type="project" value="UniProtKB-ARBA"/>
</dbReference>
<dbReference type="GO" id="GO:0015935">
    <property type="term" value="C:small ribosomal subunit"/>
    <property type="evidence" value="ECO:0007669"/>
    <property type="project" value="InterPro"/>
</dbReference>
<dbReference type="GO" id="GO:0019843">
    <property type="term" value="F:rRNA binding"/>
    <property type="evidence" value="ECO:0007669"/>
    <property type="project" value="UniProtKB-UniRule"/>
</dbReference>
<dbReference type="GO" id="GO:0003735">
    <property type="term" value="F:structural constituent of ribosome"/>
    <property type="evidence" value="ECO:0007669"/>
    <property type="project" value="InterPro"/>
</dbReference>
<dbReference type="GO" id="GO:0000028">
    <property type="term" value="P:ribosomal small subunit assembly"/>
    <property type="evidence" value="ECO:0007669"/>
    <property type="project" value="TreeGrafter"/>
</dbReference>
<dbReference type="GO" id="GO:0006412">
    <property type="term" value="P:translation"/>
    <property type="evidence" value="ECO:0007669"/>
    <property type="project" value="UniProtKB-UniRule"/>
</dbReference>
<dbReference type="FunFam" id="3.30.860.10:FF:000001">
    <property type="entry name" value="30S ribosomal protein S19"/>
    <property type="match status" value="1"/>
</dbReference>
<dbReference type="Gene3D" id="3.30.860.10">
    <property type="entry name" value="30s Ribosomal Protein S19, Chain A"/>
    <property type="match status" value="1"/>
</dbReference>
<dbReference type="HAMAP" id="MF_00531">
    <property type="entry name" value="Ribosomal_uS19"/>
    <property type="match status" value="1"/>
</dbReference>
<dbReference type="InterPro" id="IPR002222">
    <property type="entry name" value="Ribosomal_uS19"/>
</dbReference>
<dbReference type="InterPro" id="IPR005732">
    <property type="entry name" value="Ribosomal_uS19_bac-type"/>
</dbReference>
<dbReference type="InterPro" id="IPR020934">
    <property type="entry name" value="Ribosomal_uS19_CS"/>
</dbReference>
<dbReference type="InterPro" id="IPR023575">
    <property type="entry name" value="Ribosomal_uS19_SF"/>
</dbReference>
<dbReference type="NCBIfam" id="TIGR01050">
    <property type="entry name" value="rpsS_bact"/>
    <property type="match status" value="1"/>
</dbReference>
<dbReference type="PANTHER" id="PTHR11880">
    <property type="entry name" value="RIBOSOMAL PROTEIN S19P FAMILY MEMBER"/>
    <property type="match status" value="1"/>
</dbReference>
<dbReference type="PANTHER" id="PTHR11880:SF8">
    <property type="entry name" value="SMALL RIBOSOMAL SUBUNIT PROTEIN US19M"/>
    <property type="match status" value="1"/>
</dbReference>
<dbReference type="Pfam" id="PF00203">
    <property type="entry name" value="Ribosomal_S19"/>
    <property type="match status" value="1"/>
</dbReference>
<dbReference type="PIRSF" id="PIRSF002144">
    <property type="entry name" value="Ribosomal_S19"/>
    <property type="match status" value="1"/>
</dbReference>
<dbReference type="PRINTS" id="PR00975">
    <property type="entry name" value="RIBOSOMALS19"/>
</dbReference>
<dbReference type="SUPFAM" id="SSF54570">
    <property type="entry name" value="Ribosomal protein S19"/>
    <property type="match status" value="1"/>
</dbReference>
<dbReference type="PROSITE" id="PS00323">
    <property type="entry name" value="RIBOSOMAL_S19"/>
    <property type="match status" value="1"/>
</dbReference>
<evidence type="ECO:0000255" key="1">
    <source>
        <dbReference type="HAMAP-Rule" id="MF_00531"/>
    </source>
</evidence>
<evidence type="ECO:0000305" key="2"/>
<name>RS19_SOLUE</name>
<keyword id="KW-0687">Ribonucleoprotein</keyword>
<keyword id="KW-0689">Ribosomal protein</keyword>
<keyword id="KW-0694">RNA-binding</keyword>
<keyword id="KW-0699">rRNA-binding</keyword>
<protein>
    <recommendedName>
        <fullName evidence="1">Small ribosomal subunit protein uS19</fullName>
    </recommendedName>
    <alternativeName>
        <fullName evidence="2">30S ribosomal protein S19</fullName>
    </alternativeName>
</protein>
<gene>
    <name evidence="1" type="primary">rpsS</name>
    <name type="ordered locus">Acid_5114</name>
</gene>
<organism>
    <name type="scientific">Solibacter usitatus (strain Ellin6076)</name>
    <dbReference type="NCBI Taxonomy" id="234267"/>
    <lineage>
        <taxon>Bacteria</taxon>
        <taxon>Pseudomonadati</taxon>
        <taxon>Acidobacteriota</taxon>
        <taxon>Terriglobia</taxon>
        <taxon>Bryobacterales</taxon>
        <taxon>Solibacteraceae</taxon>
        <taxon>Candidatus Solibacter</taxon>
    </lineage>
</organism>
<reference key="1">
    <citation type="journal article" date="2009" name="Appl. Environ. Microbiol.">
        <title>Three genomes from the phylum Acidobacteria provide insight into the lifestyles of these microorganisms in soils.</title>
        <authorList>
            <person name="Ward N.L."/>
            <person name="Challacombe J.F."/>
            <person name="Janssen P.H."/>
            <person name="Henrissat B."/>
            <person name="Coutinho P.M."/>
            <person name="Wu M."/>
            <person name="Xie G."/>
            <person name="Haft D.H."/>
            <person name="Sait M."/>
            <person name="Badger J."/>
            <person name="Barabote R.D."/>
            <person name="Bradley B."/>
            <person name="Brettin T.S."/>
            <person name="Brinkac L.M."/>
            <person name="Bruce D."/>
            <person name="Creasy T."/>
            <person name="Daugherty S.C."/>
            <person name="Davidsen T.M."/>
            <person name="DeBoy R.T."/>
            <person name="Detter J.C."/>
            <person name="Dodson R.J."/>
            <person name="Durkin A.S."/>
            <person name="Ganapathy A."/>
            <person name="Gwinn-Giglio M."/>
            <person name="Han C.S."/>
            <person name="Khouri H."/>
            <person name="Kiss H."/>
            <person name="Kothari S.P."/>
            <person name="Madupu R."/>
            <person name="Nelson K.E."/>
            <person name="Nelson W.C."/>
            <person name="Paulsen I."/>
            <person name="Penn K."/>
            <person name="Ren Q."/>
            <person name="Rosovitz M.J."/>
            <person name="Selengut J.D."/>
            <person name="Shrivastava S."/>
            <person name="Sullivan S.A."/>
            <person name="Tapia R."/>
            <person name="Thompson L.S."/>
            <person name="Watkins K.L."/>
            <person name="Yang Q."/>
            <person name="Yu C."/>
            <person name="Zafar N."/>
            <person name="Zhou L."/>
            <person name="Kuske C.R."/>
        </authorList>
    </citation>
    <scope>NUCLEOTIDE SEQUENCE [LARGE SCALE GENOMIC DNA]</scope>
    <source>
        <strain>Ellin6076</strain>
    </source>
</reference>
<sequence>MGRSVKKGPFTDTHLEAKLMVLNAASEKKVVRTWSRRSTILPEFVGHTIAVHNGKKFIPVYVTENMVGHKLGEFSPTRTFKGHSVKAATEKSSKPS</sequence>
<accession>Q01W96</accession>
<feature type="chain" id="PRO_1000051128" description="Small ribosomal subunit protein uS19">
    <location>
        <begin position="1"/>
        <end position="96"/>
    </location>
</feature>
<comment type="function">
    <text evidence="1">Protein S19 forms a complex with S13 that binds strongly to the 16S ribosomal RNA.</text>
</comment>
<comment type="similarity">
    <text evidence="1">Belongs to the universal ribosomal protein uS19 family.</text>
</comment>